<keyword id="KW-0067">ATP-binding</keyword>
<keyword id="KW-0547">Nucleotide-binding</keyword>
<keyword id="KW-0539">Nucleus</keyword>
<keyword id="KW-1185">Reference proteome</keyword>
<proteinExistence type="evidence at protein level"/>
<organism evidence="13">
    <name type="scientific">Caenorhabditis elegans</name>
    <dbReference type="NCBI Taxonomy" id="6239"/>
    <lineage>
        <taxon>Eukaryota</taxon>
        <taxon>Metazoa</taxon>
        <taxon>Ecdysozoa</taxon>
        <taxon>Nematoda</taxon>
        <taxon>Chromadorea</taxon>
        <taxon>Rhabditida</taxon>
        <taxon>Rhabditina</taxon>
        <taxon>Rhabditomorpha</taxon>
        <taxon>Rhabditoidea</taxon>
        <taxon>Rhabditidae</taxon>
        <taxon>Peloderinae</taxon>
        <taxon>Caenorhabditis</taxon>
    </lineage>
</organism>
<comment type="function">
    <text evidence="1 4 5 6 7">Adapter protein that regulates different signaling pathways (By similarity). Required for larval development and viability (PubMed:27927209). Involved in negatively modulating pmk-1 p38/MAPK signaling (PubMed:27927209). Involved in innate immunity, acting either in a manner dependent upon, or independent of, the pmk-1 or pmk-3 p38/MAPK pathways (PubMed:18394898, PubMed:27927200, PubMed:34407394). Has a protective role in response to infection by the Gram-negative bacterium P.aeruginosa, acting by negatively modulating expression of cebp-1, and regulating the pmk-1 p38/MAPK pathway, leading to activation of transcription factor skn-1 (PubMed:27927200, PubMed:34407394). Required to prevent P.aeruginosa toxin ToxA-mediated lethality, probably acting via modulating the effects of translational inhibition caused by the toxin (PubMed:27927200). By regulating the up-regulation in the epidermis of antimicrobial peptides nlp-29 and nlp-31, plays a role in resistance to fungal infection (PubMed:18394898, PubMed:27927200).</text>
</comment>
<comment type="subunit">
    <text evidence="6">May interact with transcription factor cebp-1 (via N-terminus).</text>
</comment>
<comment type="subcellular location">
    <subcellularLocation>
        <location evidence="6">Nucleus</location>
    </subcellularLocation>
</comment>
<comment type="tissue specificity">
    <text evidence="4 6">Expressed in epidermis, pharynx, intestine, a subset of head neurons and motoneurons.</text>
</comment>
<comment type="developmental stage">
    <text evidence="4">Expressed in the 3-fold stage embryo.</text>
</comment>
<comment type="domain">
    <text evidence="2">The protein kinase domain is predicted to be catalytically inactive.</text>
</comment>
<comment type="disruption phenotype">
    <text evidence="4 5 6 7">Arrested development at the second to third larval stages (L2-L3) and lethality between 5-10 days after hatching (PubMed:27927209). Small and dumpy body morphology at the second to third larval stages (L2-L3), abnormal pharyngeal morphology, sterility (PubMed:27927209). Growth and fertility defects are suppressed in a cebp-1 mutant background (PubMed:27927209). Lethality is suppressed in several mutant backgrounds, including tir-1, or kinases nsy-1, sek-1 or mak-2 (PubMed:27927209). Levels of phosphorylated, active p38/MAPK pmk-1 are significantly increased (PubMed:27927209). Increased levels of cebp-1 mRNA in multiple tissues (PubMed:27927209). RNAi-mediated knockdown results in a loss of nlp-29 expression upon fungal infection (PubMed:18394898). No other obvious phenotype (PubMed:18394898). Knockdown results in a drastic reduction in transcription of gst-4 and gcs-1 mRNAs during infection by P.aeruginosa or P.faecalis, or treatment with the oxidant, arsenite (PubMed:34407394). RNAi-mediated knockdown targeted to intestinal cells causes hypersusceptibility to Gram-negative bacterium P.aeruginosa or to Gram-positive bacterium E.faecalis and also to the P.aeruginosa toxin ToxA (PubMed:27927200, PubMed:34407394). Simultaneous knockdown with vhp-1, targeted to intestinal cells, results in partial rescue of the nipi-3 pathogen sensitivity phenotype (PubMed:34407394).</text>
</comment>
<comment type="similarity">
    <text evidence="11">Belongs to the protein kinase superfamily. CAMK Ser/Thr protein kinase family.</text>
</comment>
<gene>
    <name evidence="14" type="primary">nipi-3</name>
    <name evidence="14" type="ORF">K09A9.1</name>
</gene>
<accession>G5EED4</accession>
<evidence type="ECO:0000250" key="1">
    <source>
        <dbReference type="UniProtKB" id="Q9V3Z1"/>
    </source>
</evidence>
<evidence type="ECO:0000255" key="2">
    <source>
        <dbReference type="PROSITE-ProRule" id="PRU00159"/>
    </source>
</evidence>
<evidence type="ECO:0000256" key="3">
    <source>
        <dbReference type="SAM" id="MobiDB-lite"/>
    </source>
</evidence>
<evidence type="ECO:0000269" key="4">
    <source>
    </source>
</evidence>
<evidence type="ECO:0000269" key="5">
    <source>
    </source>
</evidence>
<evidence type="ECO:0000269" key="6">
    <source>
    </source>
</evidence>
<evidence type="ECO:0000269" key="7">
    <source>
    </source>
</evidence>
<evidence type="ECO:0000303" key="8">
    <source>
    </source>
</evidence>
<evidence type="ECO:0000303" key="9">
    <source>
    </source>
</evidence>
<evidence type="ECO:0000303" key="10">
    <source>
    </source>
</evidence>
<evidence type="ECO:0000305" key="11"/>
<evidence type="ECO:0000312" key="12">
    <source>
        <dbReference type="EMBL" id="ABW05091.1"/>
    </source>
</evidence>
<evidence type="ECO:0000312" key="13">
    <source>
        <dbReference type="Proteomes" id="UP000001940"/>
    </source>
</evidence>
<evidence type="ECO:0000312" key="14">
    <source>
        <dbReference type="WormBase" id="K09A9.1"/>
    </source>
</evidence>
<dbReference type="EMBL" id="EU043523">
    <property type="protein sequence ID" value="ABW05091.1"/>
    <property type="molecule type" value="mRNA"/>
</dbReference>
<dbReference type="EMBL" id="BX284606">
    <property type="protein sequence ID" value="CAB01883.3"/>
    <property type="molecule type" value="Genomic_DNA"/>
</dbReference>
<dbReference type="RefSeq" id="NP_510573.3">
    <property type="nucleotide sequence ID" value="NM_078172.10"/>
</dbReference>
<dbReference type="SMR" id="G5EED4"/>
<dbReference type="FunCoup" id="G5EED4">
    <property type="interactions" value="372"/>
</dbReference>
<dbReference type="STRING" id="6239.K09A9.1.1"/>
<dbReference type="PaxDb" id="6239-K09A9.1"/>
<dbReference type="EnsemblMetazoa" id="K09A9.1.1">
    <property type="protein sequence ID" value="K09A9.1.1"/>
    <property type="gene ID" value="WBGene00010700"/>
</dbReference>
<dbReference type="GeneID" id="181650"/>
<dbReference type="KEGG" id="cel:CELE_K09A9.1"/>
<dbReference type="AGR" id="WB:WBGene00010700"/>
<dbReference type="CTD" id="181650"/>
<dbReference type="WormBase" id="K09A9.1">
    <property type="protein sequence ID" value="CE42581"/>
    <property type="gene ID" value="WBGene00010700"/>
    <property type="gene designation" value="nipi-3"/>
</dbReference>
<dbReference type="eggNOG" id="ENOG502TG0H">
    <property type="taxonomic scope" value="Eukaryota"/>
</dbReference>
<dbReference type="HOGENOM" id="CLU_422256_0_0_1"/>
<dbReference type="InParanoid" id="G5EED4"/>
<dbReference type="OMA" id="GKYPFHE"/>
<dbReference type="OrthoDB" id="410920at2759"/>
<dbReference type="PhylomeDB" id="G5EED4"/>
<dbReference type="Reactome" id="R-CEL-1257604">
    <property type="pathway name" value="PIP3 activates AKT signaling"/>
</dbReference>
<dbReference type="Reactome" id="R-CEL-165158">
    <property type="pathway name" value="Activation of AKT2"/>
</dbReference>
<dbReference type="Reactome" id="R-CEL-199418">
    <property type="pathway name" value="Negative regulation of the PI3K/AKT network"/>
</dbReference>
<dbReference type="Reactome" id="R-CEL-389357">
    <property type="pathway name" value="CD28 dependent PI3K/Akt signaling"/>
</dbReference>
<dbReference type="Reactome" id="R-CEL-5218920">
    <property type="pathway name" value="VEGFR2 mediated vascular permeability"/>
</dbReference>
<dbReference type="PRO" id="PR:G5EED4"/>
<dbReference type="Proteomes" id="UP000001940">
    <property type="component" value="Chromosome X"/>
</dbReference>
<dbReference type="Bgee" id="WBGene00010700">
    <property type="expression patterns" value="Expressed in pharyngeal muscle cell (C elegans) and 4 other cell types or tissues"/>
</dbReference>
<dbReference type="GO" id="GO:0005634">
    <property type="term" value="C:nucleus"/>
    <property type="evidence" value="ECO:0000318"/>
    <property type="project" value="GO_Central"/>
</dbReference>
<dbReference type="GO" id="GO:0005524">
    <property type="term" value="F:ATP binding"/>
    <property type="evidence" value="ECO:0007669"/>
    <property type="project" value="UniProtKB-KW"/>
</dbReference>
<dbReference type="GO" id="GO:0140297">
    <property type="term" value="F:DNA-binding transcription factor binding"/>
    <property type="evidence" value="ECO:0000353"/>
    <property type="project" value="UniProtKB"/>
</dbReference>
<dbReference type="GO" id="GO:0031434">
    <property type="term" value="F:mitogen-activated protein kinase kinase binding"/>
    <property type="evidence" value="ECO:0000318"/>
    <property type="project" value="GO_Central"/>
</dbReference>
<dbReference type="GO" id="GO:0004672">
    <property type="term" value="F:protein kinase activity"/>
    <property type="evidence" value="ECO:0007669"/>
    <property type="project" value="InterPro"/>
</dbReference>
<dbReference type="GO" id="GO:0061760">
    <property type="term" value="P:antifungal innate immune response"/>
    <property type="evidence" value="ECO:0000315"/>
    <property type="project" value="WormBase"/>
</dbReference>
<dbReference type="GO" id="GO:0050832">
    <property type="term" value="P:defense response to fungus"/>
    <property type="evidence" value="ECO:0000315"/>
    <property type="project" value="UniProtKB"/>
</dbReference>
<dbReference type="GO" id="GO:0050829">
    <property type="term" value="P:defense response to Gram-negative bacterium"/>
    <property type="evidence" value="ECO:0000315"/>
    <property type="project" value="UniProtKB"/>
</dbReference>
<dbReference type="GO" id="GO:0050830">
    <property type="term" value="P:defense response to Gram-positive bacterium"/>
    <property type="evidence" value="ECO:0000315"/>
    <property type="project" value="UniProtKB"/>
</dbReference>
<dbReference type="GO" id="GO:0010629">
    <property type="term" value="P:negative regulation of gene expression"/>
    <property type="evidence" value="ECO:0000315"/>
    <property type="project" value="UniProtKB"/>
</dbReference>
<dbReference type="GO" id="GO:0010628">
    <property type="term" value="P:positive regulation of gene expression"/>
    <property type="evidence" value="ECO:0000315"/>
    <property type="project" value="UniProtKB"/>
</dbReference>
<dbReference type="GO" id="GO:0032436">
    <property type="term" value="P:positive regulation of proteasomal ubiquitin-dependent protein catabolic process"/>
    <property type="evidence" value="ECO:0000318"/>
    <property type="project" value="GO_Central"/>
</dbReference>
<dbReference type="GO" id="GO:0010468">
    <property type="term" value="P:regulation of gene expression"/>
    <property type="evidence" value="ECO:0000315"/>
    <property type="project" value="UniProtKB"/>
</dbReference>
<dbReference type="Gene3D" id="1.10.510.10">
    <property type="entry name" value="Transferase(Phosphotransferase) domain 1"/>
    <property type="match status" value="1"/>
</dbReference>
<dbReference type="InterPro" id="IPR011009">
    <property type="entry name" value="Kinase-like_dom_sf"/>
</dbReference>
<dbReference type="InterPro" id="IPR000719">
    <property type="entry name" value="Prot_kinase_dom"/>
</dbReference>
<dbReference type="InterPro" id="IPR024104">
    <property type="entry name" value="Tribbles/Ser_Thr_kinase_40"/>
</dbReference>
<dbReference type="PANTHER" id="PTHR22961">
    <property type="entry name" value="SER/THR PROTEIN KINASE-TRB"/>
    <property type="match status" value="1"/>
</dbReference>
<dbReference type="PANTHER" id="PTHR22961:SF13">
    <property type="entry name" value="TRIBBLES"/>
    <property type="match status" value="1"/>
</dbReference>
<dbReference type="Pfam" id="PF00069">
    <property type="entry name" value="Pkinase"/>
    <property type="match status" value="1"/>
</dbReference>
<dbReference type="SMART" id="SM00220">
    <property type="entry name" value="S_TKc"/>
    <property type="match status" value="1"/>
</dbReference>
<dbReference type="SUPFAM" id="SSF56112">
    <property type="entry name" value="Protein kinase-like (PK-like)"/>
    <property type="match status" value="1"/>
</dbReference>
<dbReference type="PROSITE" id="PS50011">
    <property type="entry name" value="PROTEIN_KINASE_DOM"/>
    <property type="match status" value="1"/>
</dbReference>
<reference evidence="12" key="1">
    <citation type="journal article" date="2008" name="Curr. Biol.">
        <title>Distinct innate immune responses to infection and wounding in the C. elegans epidermis.</title>
        <authorList>
            <person name="Pujol N."/>
            <person name="Cypowyj S."/>
            <person name="Ziegler K."/>
            <person name="Millet A."/>
            <person name="Astrain A."/>
            <person name="Goncharov A."/>
            <person name="Jin Y."/>
            <person name="Chisholm A.D."/>
            <person name="Ewbank J.J."/>
        </authorList>
    </citation>
    <scope>NUCLEOTIDE SEQUENCE [MRNA]</scope>
    <scope>FUNCTION</scope>
    <scope>TISSUE SPECIFICITY</scope>
    <scope>DEVELOPMENTAL STAGE</scope>
    <scope>DISRUPTION PHENOTYPE</scope>
    <scope>MUTAGENESIS OF ILE-307</scope>
</reference>
<reference evidence="13" key="2">
    <citation type="journal article" date="1998" name="Science">
        <title>Genome sequence of the nematode C. elegans: a platform for investigating biology.</title>
        <authorList>
            <consortium name="The C. elegans sequencing consortium"/>
        </authorList>
    </citation>
    <scope>NUCLEOTIDE SEQUENCE [LARGE SCALE GENOMIC DNA]</scope>
    <source>
        <strain evidence="13">Bristol N2</strain>
    </source>
</reference>
<reference key="3">
    <citation type="journal article" date="2016" name="BMC Biol.">
        <title>Coordinated inhibition of C/EBP by Tribbles in multiple tissues is essential for Caenorhabditis elegans development.</title>
        <authorList>
            <person name="Kim K.W."/>
            <person name="Thakur N."/>
            <person name="Piggott C.A."/>
            <person name="Omi S."/>
            <person name="Polanowska J."/>
            <person name="Jin Y."/>
            <person name="Pujol N."/>
        </authorList>
    </citation>
    <scope>FUNCTION</scope>
    <scope>INTERACTION WITH CEBP-1</scope>
    <scope>SUBCELLULAR LOCATION</scope>
    <scope>TISSUE SPECIFICITY</scope>
    <scope>DISRUPTION PHENOTYPE</scope>
</reference>
<reference key="4">
    <citation type="journal article" date="2016" name="BMC Biol.">
        <title>Tribbles ortholog NIPI-3 and bZIP transcription factor CEBP-1 regulate a Caenorhabditis elegans intestinal immune surveillance pathway.</title>
        <authorList>
            <person name="McEwan D.L."/>
            <person name="Feinbaum R.L."/>
            <person name="Stroustrup N."/>
            <person name="Haas W."/>
            <person name="Conery A.L."/>
            <person name="Anselmo A."/>
            <person name="Sadreyev R."/>
            <person name="Ausubel F.M."/>
        </authorList>
    </citation>
    <scope>FUNCTION</scope>
    <scope>DISRUPTION PHENOTYPE</scope>
    <scope>MUTAGENESIS OF ILE-307</scope>
</reference>
<reference key="5">
    <citation type="journal article" date="2021" name="Cell Rep.">
        <title>Tribbles pseudokinase NIPI-3 regulates intestinal immunity in Caenorhabditis elegans by controlling SKN-1/Nrf activity.</title>
        <authorList>
            <person name="Wu C."/>
            <person name="Karakuzu O."/>
            <person name="Garsin D.A."/>
        </authorList>
    </citation>
    <scope>FUNCTION</scope>
    <scope>DISRUPTION PHENOTYPE</scope>
    <scope>MUTAGENESIS OF ILE-307</scope>
</reference>
<feature type="chain" id="PRO_0000433603" description="Protein nipi-3" evidence="11">
    <location>
        <begin position="1"/>
        <end position="655"/>
    </location>
</feature>
<feature type="domain" description="Protein kinase" evidence="2">
    <location>
        <begin position="200"/>
        <end position="470"/>
    </location>
</feature>
<feature type="region of interest" description="Disordered" evidence="3">
    <location>
        <begin position="1"/>
        <end position="35"/>
    </location>
</feature>
<feature type="compositionally biased region" description="Basic and acidic residues" evidence="3">
    <location>
        <begin position="21"/>
        <end position="35"/>
    </location>
</feature>
<feature type="binding site" evidence="2">
    <location>
        <begin position="206"/>
        <end position="214"/>
    </location>
    <ligand>
        <name>ATP</name>
        <dbReference type="ChEBI" id="CHEBI:30616"/>
    </ligand>
</feature>
<feature type="binding site" evidence="2">
    <location>
        <position position="235"/>
    </location>
    <ligand>
        <name>ATP</name>
        <dbReference type="ChEBI" id="CHEBI:30616"/>
    </ligand>
</feature>
<feature type="mutagenesis site" description="In fr4; Susceptibility to fungal infection characterized by a severe loss of nlp-29 and nlp-31 expression and a decrease in survival. Susceptibility to bacterial pathogens P.aeruginosa or E.faecalis is characterized by a decrease in survival rate; this phenotype is abrogated in a cebp-1 mutant background. Drastic reduction in transcription of gst-4 and gcs-1 mRNAs during infection by P.aeruginosa or P.faecalis; this phenotype is abrogated in a cebp-1 mutant background. Increased level of vhp-1 mRNA during P.aeruginosa or E.faecalis infection. Level of pmk-1 phosphorylation reduced during E.faecalis infection, despite almost normal overall level of pmk-1 protein. Animals have a temperature-sensitive reduction in size. In absence of infection, reduced survival rate. Dramatically reduced lifespan in response to ToxA from Gram-negative bacterium P.aeruginosa. Reduced viability in response to translational inhibitor, G418." evidence="4 5 7">
    <original>I</original>
    <variation>N</variation>
    <location>
        <position position="307"/>
    </location>
</feature>
<name>NIPI3_CAEEL</name>
<sequence>MARTKCKTKTVANPRTGVRKTAKDLSEPVRQDAVSRRRPTTLPFVGNTSSRPRVFYDVLAKKNVVFPNVKAEYHYRVRNAPKIDPKNFGTTLPICYSSIGPAKTLELRPLGRLPPHIIKALNDHYVQLTRGSMVPAADLYNNGDHPAEQRIPTMLNENEYLRLIQELEEEEKSKQFSATSSSAPHVNPYSAQHLVNGEIIGIFVIYGTGLVTRAVCSQTREMFTAHVLPEWKASKVIDVIRRLQIPTDISSMTADEIRLSELCISKRMEIIKSNDRYILMNPCESATIHSYATERLDEITENDVMSIYQKVVEIVRFCHSRKVILQNFKPRSFYLKKDAHNKWVVRPCFLQDMSCEEDQSEAQFTRRSVCVPFMAPEMLTAESRTHHSYSTELWGLGVLLYILLTGKYPFHENSMPLLFRTIKFKQHRWPFNFISSKSRNIVNMLLKKAPATRMNLEDLWNQVNGDFPEIRCRSNIILKKQDMIVKMDLFEMYYNTYKDRLLPKNVLPMYEEMKACRNDSTILTEMAKRDFRSIQEQMKRRIETKPTEYQTLVMQVRLQQINQLFFEKEVSQAQKQHRAPRLVQLKCSDISKELLLPGDIYPISEHYHPSQQPVDKVVYKLLSDANSLAFPTVMKGTVPKSYPPPVFKGLDISPS</sequence>
<protein>
    <recommendedName>
        <fullName evidence="11">Protein nipi-3</fullName>
    </recommendedName>
    <alternativeName>
        <fullName evidence="14">No induction of peptide after drechmeria infection protein 3</fullName>
    </alternativeName>
    <alternativeName>
        <fullName evidence="8 9 10">Tribbles homolog nipi-3</fullName>
    </alternativeName>
</protein>